<feature type="chain" id="PRO_1000063913" description="Methylenetetrahydrofolate--tRNA-(uracil-5-)-methyltransferase TrmFO">
    <location>
        <begin position="1"/>
        <end position="466"/>
    </location>
</feature>
<feature type="binding site" evidence="1">
    <location>
        <begin position="14"/>
        <end position="19"/>
    </location>
    <ligand>
        <name>FAD</name>
        <dbReference type="ChEBI" id="CHEBI:57692"/>
    </ligand>
</feature>
<comment type="function">
    <text evidence="1">Catalyzes the folate-dependent formation of 5-methyl-uridine at position 54 (M-5-U54) in all tRNAs.</text>
</comment>
<comment type="catalytic activity">
    <reaction evidence="1">
        <text>uridine(54) in tRNA + (6R)-5,10-methylene-5,6,7,8-tetrahydrofolate + NADH + H(+) = 5-methyluridine(54) in tRNA + (6S)-5,6,7,8-tetrahydrofolate + NAD(+)</text>
        <dbReference type="Rhea" id="RHEA:16873"/>
        <dbReference type="Rhea" id="RHEA-COMP:10167"/>
        <dbReference type="Rhea" id="RHEA-COMP:10193"/>
        <dbReference type="ChEBI" id="CHEBI:15378"/>
        <dbReference type="ChEBI" id="CHEBI:15636"/>
        <dbReference type="ChEBI" id="CHEBI:57453"/>
        <dbReference type="ChEBI" id="CHEBI:57540"/>
        <dbReference type="ChEBI" id="CHEBI:57945"/>
        <dbReference type="ChEBI" id="CHEBI:65315"/>
        <dbReference type="ChEBI" id="CHEBI:74447"/>
        <dbReference type="EC" id="2.1.1.74"/>
    </reaction>
</comment>
<comment type="catalytic activity">
    <reaction evidence="1">
        <text>uridine(54) in tRNA + (6R)-5,10-methylene-5,6,7,8-tetrahydrofolate + NADPH + H(+) = 5-methyluridine(54) in tRNA + (6S)-5,6,7,8-tetrahydrofolate + NADP(+)</text>
        <dbReference type="Rhea" id="RHEA:62372"/>
        <dbReference type="Rhea" id="RHEA-COMP:10167"/>
        <dbReference type="Rhea" id="RHEA-COMP:10193"/>
        <dbReference type="ChEBI" id="CHEBI:15378"/>
        <dbReference type="ChEBI" id="CHEBI:15636"/>
        <dbReference type="ChEBI" id="CHEBI:57453"/>
        <dbReference type="ChEBI" id="CHEBI:57783"/>
        <dbReference type="ChEBI" id="CHEBI:58349"/>
        <dbReference type="ChEBI" id="CHEBI:65315"/>
        <dbReference type="ChEBI" id="CHEBI:74447"/>
        <dbReference type="EC" id="2.1.1.74"/>
    </reaction>
</comment>
<comment type="cofactor">
    <cofactor evidence="1">
        <name>FAD</name>
        <dbReference type="ChEBI" id="CHEBI:57692"/>
    </cofactor>
</comment>
<comment type="subcellular location">
    <subcellularLocation>
        <location evidence="1">Cytoplasm</location>
    </subcellularLocation>
</comment>
<comment type="similarity">
    <text evidence="1">Belongs to the MnmG family. TrmFO subfamily.</text>
</comment>
<accession>A5VQ76</accession>
<gene>
    <name evidence="1" type="primary">trmFO</name>
    <name type="synonym">gid</name>
    <name type="ordered locus">BOV_0890</name>
</gene>
<protein>
    <recommendedName>
        <fullName evidence="1">Methylenetetrahydrofolate--tRNA-(uracil-5-)-methyltransferase TrmFO</fullName>
        <ecNumber evidence="1">2.1.1.74</ecNumber>
    </recommendedName>
    <alternativeName>
        <fullName evidence="1">Folate-dependent tRNA (uracil-5-)-methyltransferase</fullName>
    </alternativeName>
    <alternativeName>
        <fullName evidence="1">Folate-dependent tRNA(M-5-U54)-methyltransferase</fullName>
    </alternativeName>
</protein>
<reference key="1">
    <citation type="journal article" date="2009" name="PLoS ONE">
        <title>Genome degradation in Brucella ovis corresponds with narrowing of its host range and tissue tropism.</title>
        <authorList>
            <person name="Tsolis R.M."/>
            <person name="Seshadri R."/>
            <person name="Santos R.L."/>
            <person name="Sangari F.J."/>
            <person name="Lobo J.M."/>
            <person name="de Jong M.F."/>
            <person name="Ren Q."/>
            <person name="Myers G."/>
            <person name="Brinkac L.M."/>
            <person name="Nelson W.C."/>
            <person name="Deboy R.T."/>
            <person name="Angiuoli S."/>
            <person name="Khouri H."/>
            <person name="Dimitrov G."/>
            <person name="Robinson J.R."/>
            <person name="Mulligan S."/>
            <person name="Walker R.L."/>
            <person name="Elzer P.E."/>
            <person name="Hassan K.A."/>
            <person name="Paulsen I.T."/>
        </authorList>
    </citation>
    <scope>NUCLEOTIDE SEQUENCE [LARGE SCALE GENOMIC DNA]</scope>
    <source>
        <strain>ATCC 25840 / 63/290 / NCTC 10512</strain>
    </source>
</reference>
<proteinExistence type="inferred from homology"/>
<dbReference type="EC" id="2.1.1.74" evidence="1"/>
<dbReference type="EMBL" id="CP000708">
    <property type="protein sequence ID" value="ABQ61275.1"/>
    <property type="molecule type" value="Genomic_DNA"/>
</dbReference>
<dbReference type="RefSeq" id="WP_002967605.1">
    <property type="nucleotide sequence ID" value="NC_009505.1"/>
</dbReference>
<dbReference type="SMR" id="A5VQ76"/>
<dbReference type="GeneID" id="45124322"/>
<dbReference type="KEGG" id="bov:BOV_0890"/>
<dbReference type="HOGENOM" id="CLU_033057_1_0_5"/>
<dbReference type="Proteomes" id="UP000006383">
    <property type="component" value="Chromosome I"/>
</dbReference>
<dbReference type="GO" id="GO:0005829">
    <property type="term" value="C:cytosol"/>
    <property type="evidence" value="ECO:0007669"/>
    <property type="project" value="TreeGrafter"/>
</dbReference>
<dbReference type="GO" id="GO:0050660">
    <property type="term" value="F:flavin adenine dinucleotide binding"/>
    <property type="evidence" value="ECO:0007669"/>
    <property type="project" value="UniProtKB-UniRule"/>
</dbReference>
<dbReference type="GO" id="GO:0047151">
    <property type="term" value="F:tRNA (uracil(54)-C5)-methyltransferase activity, 5,10-methylenetetrahydrofolate-dependent"/>
    <property type="evidence" value="ECO:0007669"/>
    <property type="project" value="UniProtKB-UniRule"/>
</dbReference>
<dbReference type="GO" id="GO:0030488">
    <property type="term" value="P:tRNA methylation"/>
    <property type="evidence" value="ECO:0007669"/>
    <property type="project" value="TreeGrafter"/>
</dbReference>
<dbReference type="GO" id="GO:0002098">
    <property type="term" value="P:tRNA wobble uridine modification"/>
    <property type="evidence" value="ECO:0007669"/>
    <property type="project" value="TreeGrafter"/>
</dbReference>
<dbReference type="Gene3D" id="3.50.50.60">
    <property type="entry name" value="FAD/NAD(P)-binding domain"/>
    <property type="match status" value="2"/>
</dbReference>
<dbReference type="HAMAP" id="MF_01037">
    <property type="entry name" value="TrmFO"/>
    <property type="match status" value="1"/>
</dbReference>
<dbReference type="InterPro" id="IPR036188">
    <property type="entry name" value="FAD/NAD-bd_sf"/>
</dbReference>
<dbReference type="InterPro" id="IPR002218">
    <property type="entry name" value="MnmG-rel"/>
</dbReference>
<dbReference type="InterPro" id="IPR020595">
    <property type="entry name" value="MnmG-rel_CS"/>
</dbReference>
<dbReference type="InterPro" id="IPR040131">
    <property type="entry name" value="MnmG_N"/>
</dbReference>
<dbReference type="InterPro" id="IPR004417">
    <property type="entry name" value="TrmFO"/>
</dbReference>
<dbReference type="NCBIfam" id="TIGR00137">
    <property type="entry name" value="gid_trmFO"/>
    <property type="match status" value="1"/>
</dbReference>
<dbReference type="NCBIfam" id="NF003739">
    <property type="entry name" value="PRK05335.1"/>
    <property type="match status" value="1"/>
</dbReference>
<dbReference type="PANTHER" id="PTHR11806">
    <property type="entry name" value="GLUCOSE INHIBITED DIVISION PROTEIN A"/>
    <property type="match status" value="1"/>
</dbReference>
<dbReference type="PANTHER" id="PTHR11806:SF2">
    <property type="entry name" value="METHYLENETETRAHYDROFOLATE--TRNA-(URACIL-5-)-METHYLTRANSFERASE TRMFO"/>
    <property type="match status" value="1"/>
</dbReference>
<dbReference type="Pfam" id="PF01134">
    <property type="entry name" value="GIDA"/>
    <property type="match status" value="1"/>
</dbReference>
<dbReference type="SUPFAM" id="SSF51905">
    <property type="entry name" value="FAD/NAD(P)-binding domain"/>
    <property type="match status" value="1"/>
</dbReference>
<dbReference type="PROSITE" id="PS01281">
    <property type="entry name" value="GIDA_2"/>
    <property type="match status" value="1"/>
</dbReference>
<sequence>MSNNTDLSPVHVIGGGLAGSEAAWQIAQAGVPVVLHEMRPVRGTDAHKTEQLAELVCSNSFRSDDAETNAVGVLHAEMRLAGSLIMACADAHQVPAGGALAVDREGFSQAVTARLEAHPLITIEREEITGLPPTEWGTTIIATGPLTAPSLAEAIAAETDADALAFFDAIAPIIHFDSINMDVCWFQSRYDKVGPGGTGKDYINCPMDKEQYEAFVAALIEGDKTDFKEWEGTPYFDGCLPIEVMAERGPETLRHGPMKPMGLTNAHNPTVKPYAVVQLRQDNALGTLYNMVGFQTKLKYGSQTGIFKMIPGLENAEFARLGGLHRNTYLNSPVLLDNVLRLKSRQTLRFAGQVTGCEGYVESSAIGLLAGRFTAAEKLSQAAVPPPPTTAFGALLGHITGGHIVTDDEPGKRSFQPMNVNFGLFPPVDVPKPEGKRLRGKEKTIAKKRALSARALADCRNWLSLY</sequence>
<keyword id="KW-0963">Cytoplasm</keyword>
<keyword id="KW-0274">FAD</keyword>
<keyword id="KW-0285">Flavoprotein</keyword>
<keyword id="KW-0489">Methyltransferase</keyword>
<keyword id="KW-0520">NAD</keyword>
<keyword id="KW-0521">NADP</keyword>
<keyword id="KW-0808">Transferase</keyword>
<keyword id="KW-0819">tRNA processing</keyword>
<evidence type="ECO:0000255" key="1">
    <source>
        <dbReference type="HAMAP-Rule" id="MF_01037"/>
    </source>
</evidence>
<name>TRMFO_BRUO2</name>
<organism>
    <name type="scientific">Brucella ovis (strain ATCC 25840 / 63/290 / NCTC 10512)</name>
    <dbReference type="NCBI Taxonomy" id="444178"/>
    <lineage>
        <taxon>Bacteria</taxon>
        <taxon>Pseudomonadati</taxon>
        <taxon>Pseudomonadota</taxon>
        <taxon>Alphaproteobacteria</taxon>
        <taxon>Hyphomicrobiales</taxon>
        <taxon>Brucellaceae</taxon>
        <taxon>Brucella/Ochrobactrum group</taxon>
        <taxon>Brucella</taxon>
    </lineage>
</organism>